<organism>
    <name type="scientific">Homo sapiens</name>
    <name type="common">Human</name>
    <dbReference type="NCBI Taxonomy" id="9606"/>
    <lineage>
        <taxon>Eukaryota</taxon>
        <taxon>Metazoa</taxon>
        <taxon>Chordata</taxon>
        <taxon>Craniata</taxon>
        <taxon>Vertebrata</taxon>
        <taxon>Euteleostomi</taxon>
        <taxon>Mammalia</taxon>
        <taxon>Eutheria</taxon>
        <taxon>Euarchontoglires</taxon>
        <taxon>Primates</taxon>
        <taxon>Haplorrhini</taxon>
        <taxon>Catarrhini</taxon>
        <taxon>Hominidae</taxon>
        <taxon>Homo</taxon>
    </lineage>
</organism>
<reference key="1">
    <citation type="journal article" date="2000" name="Gene">
        <title>Ubiquitin-like proteins: new wines in new bottles.</title>
        <authorList>
            <person name="Yeh E.T.H."/>
            <person name="Gong L."/>
            <person name="Kamitani T."/>
        </authorList>
    </citation>
    <scope>NUCLEOTIDE SEQUENCE [MRNA]</scope>
</reference>
<reference key="2">
    <citation type="submission" date="1999-10" db="EMBL/GenBank/DDBJ databases">
        <authorList>
            <person name="Choi S.J."/>
            <person name="Jeon Y.-J."/>
            <person name="Kim K.I."/>
            <person name="Nishimori S."/>
            <person name="Suzuki T."/>
            <person name="Uchida S."/>
            <person name="Shimbara N."/>
            <person name="Tanaka K."/>
            <person name="Chung C.H."/>
        </authorList>
    </citation>
    <scope>NUCLEOTIDE SEQUENCE [MRNA]</scope>
</reference>
<reference key="3">
    <citation type="journal article" date="2001" name="Genome Res.">
        <title>Towards a catalog of human genes and proteins: sequencing and analysis of 500 novel complete protein coding human cDNAs.</title>
        <authorList>
            <person name="Wiemann S."/>
            <person name="Weil B."/>
            <person name="Wellenreuther R."/>
            <person name="Gassenhuber J."/>
            <person name="Glassl S."/>
            <person name="Ansorge W."/>
            <person name="Boecher M."/>
            <person name="Bloecker H."/>
            <person name="Bauersachs S."/>
            <person name="Blum H."/>
            <person name="Lauber J."/>
            <person name="Duesterhoeft A."/>
            <person name="Beyer A."/>
            <person name="Koehrer K."/>
            <person name="Strack N."/>
            <person name="Mewes H.-W."/>
            <person name="Ottenwaelder B."/>
            <person name="Obermaier B."/>
            <person name="Tampe J."/>
            <person name="Heubner D."/>
            <person name="Wambutt R."/>
            <person name="Korn B."/>
            <person name="Klein M."/>
            <person name="Poustka A."/>
        </authorList>
    </citation>
    <scope>NUCLEOTIDE SEQUENCE [LARGE SCALE MRNA]</scope>
    <source>
        <tissue>Melanoma</tissue>
        <tissue>Uterus</tissue>
    </source>
</reference>
<reference key="4">
    <citation type="journal article" date="2007" name="BMC Genomics">
        <title>The full-ORF clone resource of the German cDNA consortium.</title>
        <authorList>
            <person name="Bechtel S."/>
            <person name="Rosenfelder H."/>
            <person name="Duda A."/>
            <person name="Schmidt C.P."/>
            <person name="Ernst U."/>
            <person name="Wellenreuther R."/>
            <person name="Mehrle A."/>
            <person name="Schuster C."/>
            <person name="Bahr A."/>
            <person name="Bloecker H."/>
            <person name="Heubner D."/>
            <person name="Hoerlein A."/>
            <person name="Michel G."/>
            <person name="Wedler H."/>
            <person name="Koehrer K."/>
            <person name="Ottenwaelder B."/>
            <person name="Poustka A."/>
            <person name="Wiemann S."/>
            <person name="Schupp I."/>
        </authorList>
    </citation>
    <scope>NUCLEOTIDE SEQUENCE [LARGE SCALE MRNA]</scope>
</reference>
<reference key="5">
    <citation type="journal article" date="2004" name="Genome Res.">
        <title>The status, quality, and expansion of the NIH full-length cDNA project: the Mammalian Gene Collection (MGC).</title>
        <authorList>
            <consortium name="The MGC Project Team"/>
        </authorList>
    </citation>
    <scope>NUCLEOTIDE SEQUENCE [LARGE SCALE MRNA]</scope>
    <source>
        <tissue>Lymph</tissue>
        <tissue>Uterus</tissue>
    </source>
</reference>
<reference key="6">
    <citation type="journal article" date="2005" name="Cell">
        <title>Physical association and coordinate function of the H3 K4 methyltransferase MLL1 and the H4 K16 acetyltransferase MOF.</title>
        <authorList>
            <person name="Dou Y."/>
            <person name="Milne T.A."/>
            <person name="Tackett A.J."/>
            <person name="Smith E.R."/>
            <person name="Fukuda A."/>
            <person name="Wysocka J."/>
            <person name="Allis C.D."/>
            <person name="Chait B.T."/>
            <person name="Hess J.L."/>
            <person name="Roeder R.G."/>
        </authorList>
    </citation>
    <scope>IDENTIFICATION IN THE MLL1/MLL COMPLEX</scope>
</reference>
<reference key="7">
    <citation type="journal article" date="2005" name="Mol. Cell. Biol.">
        <title>Association with class IIa histone deacetylases upregulates the sumoylation of MEF2 transcription factors.</title>
        <authorList>
            <person name="Gregoire S."/>
            <person name="Yang X.-J."/>
        </authorList>
    </citation>
    <scope>FUNCTION</scope>
</reference>
<reference key="8">
    <citation type="journal article" date="2006" name="J. Biol. Chem.">
        <title>Characterization of a family of nucleolar SUMO-specific proteases with preference for SUMO-2 or SUMO-3.</title>
        <authorList>
            <person name="Gong L."/>
            <person name="Yeh E.T.H."/>
        </authorList>
    </citation>
    <scope>FUNCTION</scope>
</reference>
<reference key="9">
    <citation type="journal article" date="2008" name="EMBO Rep.">
        <title>The nucleolar SUMO-specific protease SENP3 reverses SUMO modification of nucleophosmin and is required for rRNA processing.</title>
        <authorList>
            <person name="Haindl M."/>
            <person name="Harasim T."/>
            <person name="Eick D."/>
            <person name="Muller S."/>
        </authorList>
    </citation>
    <scope>FUNCTION</scope>
    <scope>MUTAGENESIS OF CYS-532</scope>
    <scope>INTERACTION WITH NPM1</scope>
</reference>
<reference key="10">
    <citation type="journal article" date="2008" name="J. Cell Biol.">
        <title>Nucleolar protein B23/nucleophosmin regulates the vertebrate SUMO pathway through SENP3 and SENP5 proteases.</title>
        <authorList>
            <person name="Yun C."/>
            <person name="Wang Y."/>
            <person name="Mukhopadhyay D."/>
            <person name="Backlund P."/>
            <person name="Kolli N."/>
            <person name="Yergey A."/>
            <person name="Wilkinson K.D."/>
            <person name="Dasso M."/>
        </authorList>
    </citation>
    <scope>SUBCELLULAR LOCATION</scope>
    <scope>FUNCTION</scope>
    <scope>INTERACTION WITH NPM1</scope>
</reference>
<reference key="11">
    <citation type="journal article" date="2008" name="Mol. Cell">
        <title>Kinase-selective enrichment enables quantitative phosphoproteomics of the kinome across the cell cycle.</title>
        <authorList>
            <person name="Daub H."/>
            <person name="Olsen J.V."/>
            <person name="Bairlein M."/>
            <person name="Gnad F."/>
            <person name="Oppermann F.S."/>
            <person name="Korner R."/>
            <person name="Greff Z."/>
            <person name="Keri G."/>
            <person name="Stemmann O."/>
            <person name="Mann M."/>
        </authorList>
    </citation>
    <scope>IDENTIFICATION BY MASS SPECTROMETRY [LARGE SCALE ANALYSIS]</scope>
    <source>
        <tissue>Cervix carcinoma</tissue>
    </source>
</reference>
<reference key="12">
    <citation type="journal article" date="2009" name="EMBO J.">
        <title>SENP3 is responsible for HIF-1 transactivation under mild oxidative stress via p300 de-SUMOylation.</title>
        <authorList>
            <person name="Huang C."/>
            <person name="Han Y."/>
            <person name="Wang Y."/>
            <person name="Sun X."/>
            <person name="Yan S."/>
            <person name="Yeh E.T.H."/>
            <person name="Chen Y."/>
            <person name="Cang H."/>
            <person name="Li H."/>
            <person name="Shi G."/>
            <person name="Cheng J."/>
            <person name="Tang X."/>
            <person name="Yi J."/>
        </authorList>
    </citation>
    <scope>ACTIVITY REGULATION</scope>
    <scope>SUBCELLULAR LOCATION</scope>
    <scope>FUNCTION</scope>
    <scope>INTERACTION WITH EP300</scope>
</reference>
<reference key="13">
    <citation type="journal article" date="2009" name="Mol. Biol. Cell">
        <title>RanBP2 and SENP3 function in a mitotic SUMO2/3 conjugation-deconjugation cycle on Borealin.</title>
        <authorList>
            <person name="Klein U.R."/>
            <person name="Haindl M."/>
            <person name="Nigg E.A."/>
            <person name="Muller S."/>
        </authorList>
    </citation>
    <scope>FUNCTION</scope>
    <scope>INTERACTION WITH CDCA8</scope>
</reference>
<reference key="14">
    <citation type="journal article" date="2009" name="Sci. Signal.">
        <title>Quantitative phosphoproteomic analysis of T cell receptor signaling reveals system-wide modulation of protein-protein interactions.</title>
        <authorList>
            <person name="Mayya V."/>
            <person name="Lundgren D.H."/>
            <person name="Hwang S.-I."/>
            <person name="Rezaul K."/>
            <person name="Wu L."/>
            <person name="Eng J.K."/>
            <person name="Rodionov V."/>
            <person name="Han D.K."/>
        </authorList>
    </citation>
    <scope>IDENTIFICATION BY MASS SPECTROMETRY [LARGE SCALE ANALYSIS]</scope>
    <source>
        <tissue>Leukemic T-cell</tissue>
    </source>
</reference>
<reference key="15">
    <citation type="journal article" date="2012" name="Mol. Cell. Proteomics">
        <title>Five friends of methylated chromatin target of protein-arginine-methyltransferase[prmt]-1 (chtop), a complex linking arginine methylation to desumoylation.</title>
        <authorList>
            <person name="Fanis P."/>
            <person name="Gillemans N."/>
            <person name="Aghajanirefah A."/>
            <person name="Pourfarzad F."/>
            <person name="Demmers J."/>
            <person name="Esteghamat F."/>
            <person name="Vadlamudi R.K."/>
            <person name="Grosveld F."/>
            <person name="Philipsen S."/>
            <person name="van Dijk T.B."/>
        </authorList>
    </citation>
    <scope>FUNCTION</scope>
    <scope>IDENTIFICATION IN THE 5FMC COMPLEX</scope>
</reference>
<reference key="16">
    <citation type="journal article" date="2013" name="J. Proteome Res.">
        <title>Toward a comprehensive characterization of a human cancer cell phosphoproteome.</title>
        <authorList>
            <person name="Zhou H."/>
            <person name="Di Palma S."/>
            <person name="Preisinger C."/>
            <person name="Peng M."/>
            <person name="Polat A.N."/>
            <person name="Heck A.J."/>
            <person name="Mohammed S."/>
        </authorList>
    </citation>
    <scope>PHOSPHORYLATION [LARGE SCALE ANALYSIS] AT SER-54</scope>
    <scope>IDENTIFICATION BY MASS SPECTROMETRY [LARGE SCALE ANALYSIS]</scope>
    <source>
        <tissue>Cervix carcinoma</tissue>
        <tissue>Erythroleukemia</tissue>
    </source>
</reference>
<reference key="17">
    <citation type="journal article" date="2014" name="Nat. Commun.">
        <title>Modification of DBC1 by SUMO2/3 is crucial for p53-mediated apoptosis in response to DNA damage.</title>
        <authorList>
            <person name="Park J.H."/>
            <person name="Lee S.W."/>
            <person name="Yang S.W."/>
            <person name="Yoo H.M."/>
            <person name="Park J.M."/>
            <person name="Seong M.W."/>
            <person name="Ka S.H."/>
            <person name="Oh K.H."/>
            <person name="Jeon Y.J."/>
            <person name="Chung C.H."/>
        </authorList>
    </citation>
    <scope>INTERACTION WITH CCAR2</scope>
</reference>
<reference key="18">
    <citation type="journal article" date="2022" name="Nat. Commun.">
        <title>Crosstalk between SUMOylation and ubiquitylation controls DNA end resection by maintaining MRE11 homeostasis on chromatin.</title>
        <authorList>
            <person name="Zhang T."/>
            <person name="Yang H."/>
            <person name="Zhou Z."/>
            <person name="Bai Y."/>
            <person name="Wang J."/>
            <person name="Wang W."/>
        </authorList>
    </citation>
    <scope>FUNCTION</scope>
    <scope>MUTAGENESIS OF CYS-532</scope>
</reference>
<reference key="19">
    <citation type="journal article" date="2020" name="Sci. Adv.">
        <title>TIP60 K430 SUMOylation attenuates its interaction with DNA-PKcs in S-phase cells: Facilitating homologous recombination and emerging target for cancer therapy.</title>
        <authorList>
            <person name="Gao S.S."/>
            <person name="Guan H."/>
            <person name="Yan S."/>
            <person name="Hu S."/>
            <person name="Song M."/>
            <person name="Guo Z.P."/>
            <person name="Xie D.F."/>
            <person name="Liu Y."/>
            <person name="Liu X."/>
            <person name="Zhang S."/>
            <person name="Zhou P.K."/>
        </authorList>
    </citation>
    <scope>FUNCTION</scope>
</reference>
<evidence type="ECO:0000250" key="1">
    <source>
        <dbReference type="UniProtKB" id="Q9EP97"/>
    </source>
</evidence>
<evidence type="ECO:0000250" key="2">
    <source>
        <dbReference type="UniProtKB" id="Q9HC62"/>
    </source>
</evidence>
<evidence type="ECO:0000255" key="3"/>
<evidence type="ECO:0000256" key="4">
    <source>
        <dbReference type="SAM" id="MobiDB-lite"/>
    </source>
</evidence>
<evidence type="ECO:0000269" key="5">
    <source>
    </source>
</evidence>
<evidence type="ECO:0000269" key="6">
    <source>
    </source>
</evidence>
<evidence type="ECO:0000269" key="7">
    <source>
    </source>
</evidence>
<evidence type="ECO:0000269" key="8">
    <source>
    </source>
</evidence>
<evidence type="ECO:0000269" key="9">
    <source>
    </source>
</evidence>
<evidence type="ECO:0000269" key="10">
    <source>
    </source>
</evidence>
<evidence type="ECO:0000269" key="11">
    <source>
    </source>
</evidence>
<evidence type="ECO:0000269" key="12">
    <source>
    </source>
</evidence>
<evidence type="ECO:0000269" key="13">
    <source>
    </source>
</evidence>
<evidence type="ECO:0000269" key="14">
    <source>
    </source>
</evidence>
<evidence type="ECO:0000269" key="15">
    <source>
    </source>
</evidence>
<evidence type="ECO:0000303" key="16">
    <source>
    </source>
</evidence>
<evidence type="ECO:0000303" key="17">
    <source>
    </source>
</evidence>
<evidence type="ECO:0000305" key="18"/>
<evidence type="ECO:0000305" key="19">
    <source>
    </source>
</evidence>
<evidence type="ECO:0000312" key="20">
    <source>
        <dbReference type="HGNC" id="HGNC:17862"/>
    </source>
</evidence>
<evidence type="ECO:0007744" key="21">
    <source>
    </source>
</evidence>
<comment type="function">
    <text evidence="5 7 8 9 10 11 12 14 15">Protease that releases SUMO2 and SUMO3 monomers from sumoylated substrates, but has only weak activity against SUMO1 conjugates (PubMed:16608850, PubMed:32832608, PubMed:36050397). Deconjugates SUMO2 from MEF2D, which increases its transcriptional activation capability (PubMed:15743823). Deconjugates SUMO2 and SUMO3 from CDCA8 (PubMed:18946085). Redox sensor that, when redistributed into nucleoplasm, can act as an effector to enhance HIF1A transcriptional activity by desumoylating EP300 (PubMed:19680224). Required for rRNA processing through deconjugation of SUMO2 and SUMO3 from nucleophosmin, NPM1 (PubMed:19015314). Plays a role in the regulation of sumoylation status of ZNF148 (PubMed:18259216). Functions as a component of the Five Friends of Methylated CHTOP (5FMC) complex; the 5FMC complex is recruited to ZNF148 by methylated CHTOP, leading to desumoylation of ZNF148 and subsequent transactivation of ZNF148 target genes (PubMed:22872859). Deconjugates SUMO2 from KAT5 (PubMed:32832608). Catalyzes desumoylation of MRE11 (PubMed:36050397).</text>
</comment>
<comment type="activity regulation">
    <text evidence="11">On oxidative stress, SENP3 degradation is blocked by inhibition of its ubiquitination, which stabilizes it as it accumulates in the nucleoplasm.</text>
</comment>
<comment type="subunit">
    <text evidence="1 6 8 9 10 11 12 13">Component of some MLL1/MLL complex, at least composed of the core components KMT2A/MLL1, ASH2L, HCFC1/HCF1, WDR5 and RBBP5, as well as the facultative components BACC1, CHD8, E2F6, HSP70, INO80C, KANSL1, LAS1L, MAX, MCRS1, MGA, MYST1/MOF, PELP1, PHF20, PRP31, RING2, RUVB1/TIP49A, RUVB2/TIP49B, SENP3, TAF1, TAF4, TAF6, TAF7, TAF9 and TEX10 (PubMed:15960975). Interacts with EP300, NPM1 and CDCA8 (PubMed:18259216, PubMed:18946085, PubMed:19015314, PubMed:19680224). Component of the 5FMC complex, at least composed of PELP1, LAS1L, TEX10, WDR18 and SENP3; the complex interacts with methylated CHTOP and ZNF148 (PubMed:22872859). Interacts with NOL9 (By similarity). Interacts with CCAR2 (PubMed:25406032).</text>
</comment>
<comment type="interaction">
    <interactant intactId="EBI-2880236">
        <id>Q9H4L4</id>
    </interactant>
    <interactant intactId="EBI-741885">
        <id>Q96LK0</id>
        <label>CEP19</label>
    </interactant>
    <organismsDiffer>false</organismsDiffer>
    <experiments>3</experiments>
</comment>
<comment type="interaction">
    <interactant intactId="EBI-2880236">
        <id>Q9H4L4</id>
    </interactant>
    <interactant intactId="EBI-78579">
        <id>P06748</id>
        <label>NPM1</label>
    </interactant>
    <organismsDiffer>false</organismsDiffer>
    <experiments>7</experiments>
</comment>
<comment type="interaction">
    <interactant intactId="EBI-2880236">
        <id>Q9H4L4</id>
    </interactant>
    <interactant intactId="EBI-716449">
        <id>Q8IZL8</id>
        <label>PELP1</label>
    </interactant>
    <organismsDiffer>false</organismsDiffer>
    <experiments>10</experiments>
</comment>
<comment type="interaction">
    <interactant intactId="EBI-2880236">
        <id>Q9H4L4</id>
    </interactant>
    <interactant intactId="EBI-5235340">
        <id>Q7Z699</id>
        <label>SPRED1</label>
    </interactant>
    <organismsDiffer>false</organismsDiffer>
    <experiments>3</experiments>
</comment>
<comment type="interaction">
    <interactant intactId="EBI-2880236">
        <id>Q9H4L4</id>
    </interactant>
    <interactant intactId="EBI-2371062">
        <id>Q9NXF1</id>
        <label>TEX10</label>
    </interactant>
    <organismsDiffer>false</organismsDiffer>
    <experiments>4</experiments>
</comment>
<comment type="interaction">
    <interactant intactId="EBI-2880236">
        <id>Q9H4L4</id>
    </interactant>
    <interactant intactId="EBI-3390054">
        <id>P0CG48</id>
        <label>UBC</label>
    </interactant>
    <organismsDiffer>false</organismsDiffer>
    <experiments>2</experiments>
</comment>
<comment type="interaction">
    <interactant intactId="EBI-2880236">
        <id>Q9H4L4</id>
    </interactant>
    <interactant intactId="EBI-727429">
        <id>Q9BV38</id>
        <label>WDR18</label>
    </interactant>
    <organismsDiffer>false</organismsDiffer>
    <experiments>7</experiments>
</comment>
<comment type="interaction">
    <interactant intactId="EBI-2880236">
        <id>Q9H4L4</id>
    </interactant>
    <interactant intactId="EBI-720609">
        <id>O76024</id>
        <label>WFS1</label>
    </interactant>
    <organismsDiffer>false</organismsDiffer>
    <experiments>3</experiments>
</comment>
<comment type="subcellular location">
    <subcellularLocation>
        <location evidence="11">Nucleus</location>
        <location evidence="11">Nucleolus</location>
    </subcellularLocation>
    <subcellularLocation>
        <location evidence="10 11">Nucleus</location>
        <location evidence="10 11">Nucleoplasm</location>
    </subcellularLocation>
    <subcellularLocation>
        <location evidence="1">Cytoplasm</location>
    </subcellularLocation>
    <text evidence="1 11">Redistributes between the nucleolus and the nucleoplasm in response to mild oxidative stress (PubMed:19680224). Mainly found in the nucleoplasm, with low levels detected in the cytoplasmic and chromatin fractions (By similarity).</text>
</comment>
<comment type="similarity">
    <text evidence="18">Belongs to the peptidase C48 family.</text>
</comment>
<name>SENP3_HUMAN</name>
<dbReference type="EC" id="3.4.22.-" evidence="15"/>
<dbReference type="EMBL" id="AY008763">
    <property type="protein sequence ID" value="AAG33252.1"/>
    <property type="molecule type" value="mRNA"/>
</dbReference>
<dbReference type="EMBL" id="AF199459">
    <property type="protein sequence ID" value="AAL25652.1"/>
    <property type="molecule type" value="mRNA"/>
</dbReference>
<dbReference type="EMBL" id="AL050283">
    <property type="protein sequence ID" value="CAB43384.2"/>
    <property type="molecule type" value="mRNA"/>
</dbReference>
<dbReference type="EMBL" id="AL834294">
    <property type="protein sequence ID" value="CAD38967.1"/>
    <property type="molecule type" value="mRNA"/>
</dbReference>
<dbReference type="EMBL" id="BC048306">
    <property type="protein sequence ID" value="AAH48306.1"/>
    <property type="molecule type" value="mRNA"/>
</dbReference>
<dbReference type="EMBL" id="BC080658">
    <property type="protein sequence ID" value="AAH80658.1"/>
    <property type="molecule type" value="mRNA"/>
</dbReference>
<dbReference type="CCDS" id="CCDS73958.1"/>
<dbReference type="PIR" id="T08759">
    <property type="entry name" value="T08759"/>
</dbReference>
<dbReference type="RefSeq" id="NP_056485.2">
    <property type="nucleotide sequence ID" value="NM_015670.5"/>
</dbReference>
<dbReference type="SMR" id="Q9H4L4"/>
<dbReference type="BioGRID" id="117594">
    <property type="interactions" value="341"/>
</dbReference>
<dbReference type="ComplexPortal" id="CPX-8081">
    <property type="entry name" value="Rixosome RNA degradation complex"/>
</dbReference>
<dbReference type="CORUM" id="Q9H4L4"/>
<dbReference type="DIP" id="DIP-47511N"/>
<dbReference type="FunCoup" id="Q9H4L4">
    <property type="interactions" value="3419"/>
</dbReference>
<dbReference type="IntAct" id="Q9H4L4">
    <property type="interactions" value="170"/>
</dbReference>
<dbReference type="MINT" id="Q9H4L4"/>
<dbReference type="STRING" id="9606.ENSP00000314029"/>
<dbReference type="BindingDB" id="Q9H4L4"/>
<dbReference type="ChEMBL" id="CHEMBL5291568"/>
<dbReference type="MEROPS" id="C48.003"/>
<dbReference type="GlyGen" id="Q9H4L4">
    <property type="glycosylation" value="1 site, 1 O-linked glycan (1 site)"/>
</dbReference>
<dbReference type="iPTMnet" id="Q9H4L4"/>
<dbReference type="PhosphoSitePlus" id="Q9H4L4"/>
<dbReference type="SwissPalm" id="Q9H4L4"/>
<dbReference type="BioMuta" id="SENP3"/>
<dbReference type="DMDM" id="119370525"/>
<dbReference type="jPOST" id="Q9H4L4"/>
<dbReference type="MassIVE" id="Q9H4L4"/>
<dbReference type="PaxDb" id="9606-ENSP00000314029"/>
<dbReference type="PeptideAtlas" id="Q9H4L4"/>
<dbReference type="ProteomicsDB" id="80851"/>
<dbReference type="Pumba" id="Q9H4L4"/>
<dbReference type="Antibodypedia" id="24161">
    <property type="antibodies" value="248 antibodies from 32 providers"/>
</dbReference>
<dbReference type="DNASU" id="26168"/>
<dbReference type="Ensembl" id="ENST00000321337.12">
    <property type="protein sequence ID" value="ENSP00000314029.8"/>
    <property type="gene ID" value="ENSG00000161956.14"/>
</dbReference>
<dbReference type="GeneID" id="26168"/>
<dbReference type="KEGG" id="hsa:26168"/>
<dbReference type="MANE-Select" id="ENST00000321337.12">
    <property type="protein sequence ID" value="ENSP00000314029.8"/>
    <property type="RefSeq nucleotide sequence ID" value="NM_015670.6"/>
    <property type="RefSeq protein sequence ID" value="NP_056485.2"/>
</dbReference>
<dbReference type="UCSC" id="uc032esp.2">
    <property type="organism name" value="human"/>
</dbReference>
<dbReference type="AGR" id="HGNC:17862"/>
<dbReference type="CTD" id="26168"/>
<dbReference type="DisGeNET" id="26168"/>
<dbReference type="GeneCards" id="SENP3"/>
<dbReference type="HGNC" id="HGNC:17862">
    <property type="gene designation" value="SENP3"/>
</dbReference>
<dbReference type="HPA" id="ENSG00000161956">
    <property type="expression patterns" value="Low tissue specificity"/>
</dbReference>
<dbReference type="MIM" id="612844">
    <property type="type" value="gene"/>
</dbReference>
<dbReference type="neXtProt" id="NX_Q9H4L4"/>
<dbReference type="OpenTargets" id="ENSG00000161956"/>
<dbReference type="PharmGKB" id="PA134933213"/>
<dbReference type="VEuPathDB" id="HostDB:ENSG00000161956"/>
<dbReference type="eggNOG" id="KOG0778">
    <property type="taxonomic scope" value="Eukaryota"/>
</dbReference>
<dbReference type="GeneTree" id="ENSGT00940000156309"/>
<dbReference type="HOGENOM" id="CLU_035238_0_0_1"/>
<dbReference type="InParanoid" id="Q9H4L4"/>
<dbReference type="OMA" id="CRASREW"/>
<dbReference type="OrthoDB" id="1939479at2759"/>
<dbReference type="PAN-GO" id="Q9H4L4">
    <property type="GO annotations" value="3 GO annotations based on evolutionary models"/>
</dbReference>
<dbReference type="PhylomeDB" id="Q9H4L4"/>
<dbReference type="TreeFam" id="TF316289"/>
<dbReference type="BRENDA" id="3.4.22.B72">
    <property type="organism ID" value="2681"/>
</dbReference>
<dbReference type="PathwayCommons" id="Q9H4L4"/>
<dbReference type="Reactome" id="R-HSA-6791226">
    <property type="pathway name" value="Major pathway of rRNA processing in the nucleolus and cytosol"/>
</dbReference>
<dbReference type="SignaLink" id="Q9H4L4"/>
<dbReference type="SIGNOR" id="Q9H4L4"/>
<dbReference type="BioGRID-ORCS" id="26168">
    <property type="hits" value="14 hits in 327 CRISPR screens"/>
</dbReference>
<dbReference type="CD-CODE" id="91857CE7">
    <property type="entry name" value="Nucleolus"/>
</dbReference>
<dbReference type="GeneWiki" id="SENP3"/>
<dbReference type="GenomeRNAi" id="26168"/>
<dbReference type="Pharos" id="Q9H4L4">
    <property type="development level" value="Tbio"/>
</dbReference>
<dbReference type="PRO" id="PR:Q9H4L4"/>
<dbReference type="Proteomes" id="UP000005640">
    <property type="component" value="Chromosome 17"/>
</dbReference>
<dbReference type="RNAct" id="Q9H4L4">
    <property type="molecule type" value="protein"/>
</dbReference>
<dbReference type="Bgee" id="ENSG00000161956">
    <property type="expression patterns" value="Expressed in right hemisphere of cerebellum and 111 other cell types or tissues"/>
</dbReference>
<dbReference type="ExpressionAtlas" id="Q9H4L4">
    <property type="expression patterns" value="baseline and differential"/>
</dbReference>
<dbReference type="GO" id="GO:0005737">
    <property type="term" value="C:cytoplasm"/>
    <property type="evidence" value="ECO:0007669"/>
    <property type="project" value="UniProtKB-SubCell"/>
</dbReference>
<dbReference type="GO" id="GO:0043231">
    <property type="term" value="C:intracellular membrane-bounded organelle"/>
    <property type="evidence" value="ECO:0000314"/>
    <property type="project" value="HPA"/>
</dbReference>
<dbReference type="GO" id="GO:0071339">
    <property type="term" value="C:MLL1 complex"/>
    <property type="evidence" value="ECO:0000314"/>
    <property type="project" value="UniProtKB"/>
</dbReference>
<dbReference type="GO" id="GO:0016604">
    <property type="term" value="C:nuclear body"/>
    <property type="evidence" value="ECO:0000314"/>
    <property type="project" value="HPA"/>
</dbReference>
<dbReference type="GO" id="GO:0005730">
    <property type="term" value="C:nucleolus"/>
    <property type="evidence" value="ECO:0000314"/>
    <property type="project" value="LIFEdb"/>
</dbReference>
<dbReference type="GO" id="GO:0005654">
    <property type="term" value="C:nucleoplasm"/>
    <property type="evidence" value="ECO:0000314"/>
    <property type="project" value="HPA"/>
</dbReference>
<dbReference type="GO" id="GO:0005634">
    <property type="term" value="C:nucleus"/>
    <property type="evidence" value="ECO:0000318"/>
    <property type="project" value="GO_Central"/>
</dbReference>
<dbReference type="GO" id="GO:0004843">
    <property type="term" value="F:cysteine-type deubiquitinase activity"/>
    <property type="evidence" value="ECO:0007669"/>
    <property type="project" value="Ensembl"/>
</dbReference>
<dbReference type="GO" id="GO:0008234">
    <property type="term" value="F:cysteine-type peptidase activity"/>
    <property type="evidence" value="ECO:0000314"/>
    <property type="project" value="UniProtKB"/>
</dbReference>
<dbReference type="GO" id="GO:0016929">
    <property type="term" value="F:deSUMOylase activity"/>
    <property type="evidence" value="ECO:0000314"/>
    <property type="project" value="UniProtKB"/>
</dbReference>
<dbReference type="GO" id="GO:2000042">
    <property type="term" value="P:negative regulation of double-strand break repair via homologous recombination"/>
    <property type="evidence" value="ECO:0000314"/>
    <property type="project" value="UniProt"/>
</dbReference>
<dbReference type="GO" id="GO:0016926">
    <property type="term" value="P:protein desumoylation"/>
    <property type="evidence" value="ECO:0000314"/>
    <property type="project" value="UniProtKB"/>
</dbReference>
<dbReference type="GO" id="GO:0006508">
    <property type="term" value="P:proteolysis"/>
    <property type="evidence" value="ECO:0007669"/>
    <property type="project" value="UniProtKB-KW"/>
</dbReference>
<dbReference type="FunFam" id="3.40.395.10:FF:000002">
    <property type="entry name" value="Putative sentrin-specific protease 5"/>
    <property type="match status" value="1"/>
</dbReference>
<dbReference type="Gene3D" id="3.40.395.10">
    <property type="entry name" value="Adenoviral Proteinase, Chain A"/>
    <property type="match status" value="1"/>
</dbReference>
<dbReference type="InterPro" id="IPR038765">
    <property type="entry name" value="Papain-like_cys_pep_sf"/>
</dbReference>
<dbReference type="InterPro" id="IPR003653">
    <property type="entry name" value="Peptidase_C48_C"/>
</dbReference>
<dbReference type="InterPro" id="IPR045577">
    <property type="entry name" value="SENP3_5_cons_dom"/>
</dbReference>
<dbReference type="PANTHER" id="PTHR12606:SF16">
    <property type="entry name" value="SENTRIN-SPECIFIC PROTEASE 3"/>
    <property type="match status" value="1"/>
</dbReference>
<dbReference type="PANTHER" id="PTHR12606">
    <property type="entry name" value="SENTRIN/SUMO-SPECIFIC PROTEASE"/>
    <property type="match status" value="1"/>
</dbReference>
<dbReference type="Pfam" id="PF02902">
    <property type="entry name" value="Peptidase_C48"/>
    <property type="match status" value="1"/>
</dbReference>
<dbReference type="Pfam" id="PF19722">
    <property type="entry name" value="SENP3_5_N"/>
    <property type="match status" value="1"/>
</dbReference>
<dbReference type="SUPFAM" id="SSF54001">
    <property type="entry name" value="Cysteine proteinases"/>
    <property type="match status" value="1"/>
</dbReference>
<dbReference type="PROSITE" id="PS50600">
    <property type="entry name" value="ULP_PROTEASE"/>
    <property type="match status" value="1"/>
</dbReference>
<proteinExistence type="evidence at protein level"/>
<gene>
    <name evidence="16 17 20" type="primary">SENP3</name>
    <name type="synonym">SSP3</name>
    <name type="synonym">SUSP3</name>
</gene>
<feature type="chain" id="PRO_0000101721" description="Sentrin-specific protease 3">
    <location>
        <begin position="1"/>
        <end position="574"/>
    </location>
</feature>
<feature type="region of interest" description="Disordered" evidence="4">
    <location>
        <begin position="1"/>
        <end position="125"/>
    </location>
</feature>
<feature type="region of interest" description="Disordered" evidence="4">
    <location>
        <begin position="161"/>
        <end position="181"/>
    </location>
</feature>
<feature type="region of interest" description="Protease">
    <location>
        <begin position="386"/>
        <end position="543"/>
    </location>
</feature>
<feature type="short sequence motif" description="Nuclear localization signal" evidence="3">
    <location>
        <begin position="125"/>
        <end position="128"/>
    </location>
</feature>
<feature type="short sequence motif" description="Nuclear localization signal" evidence="3">
    <location>
        <begin position="153"/>
        <end position="159"/>
    </location>
</feature>
<feature type="compositionally biased region" description="Acidic residues" evidence="4">
    <location>
        <begin position="74"/>
        <end position="93"/>
    </location>
</feature>
<feature type="compositionally biased region" description="Basic residues" evidence="4">
    <location>
        <begin position="112"/>
        <end position="125"/>
    </location>
</feature>
<feature type="active site" evidence="2">
    <location>
        <position position="465"/>
    </location>
</feature>
<feature type="active site" evidence="2">
    <location>
        <position position="482"/>
    </location>
</feature>
<feature type="active site" description="Nucleophile" evidence="19">
    <location>
        <position position="532"/>
    </location>
</feature>
<feature type="modified residue" description="Phosphoserine" evidence="21">
    <location>
        <position position="54"/>
    </location>
</feature>
<feature type="modified residue" description="Phosphoserine" evidence="1">
    <location>
        <position position="73"/>
    </location>
</feature>
<feature type="modified residue" description="Phosphoserine" evidence="1">
    <location>
        <position position="75"/>
    </location>
</feature>
<feature type="modified residue" description="Phosphoserine" evidence="1">
    <location>
        <position position="169"/>
    </location>
</feature>
<feature type="modified residue" description="Phosphothreonine" evidence="1">
    <location>
        <position position="176"/>
    </location>
</feature>
<feature type="modified residue" description="Phosphoserine" evidence="1">
    <location>
        <position position="181"/>
    </location>
</feature>
<feature type="modified residue" description="Phosphoserine" evidence="1">
    <location>
        <position position="188"/>
    </location>
</feature>
<feature type="modified residue" description="Phosphoserine" evidence="1">
    <location>
        <position position="212"/>
    </location>
</feature>
<feature type="modified residue" description="Phosphoserine" evidence="1">
    <location>
        <position position="232"/>
    </location>
</feature>
<feature type="sequence variant" id="VAR_051544" description="In dbSNP:rs9972914.">
    <original>W</original>
    <variation>R</variation>
    <location>
        <position position="515"/>
    </location>
</feature>
<feature type="mutagenesis site" description="Loss of enzymatic activity." evidence="8 15">
    <original>C</original>
    <variation>S</variation>
    <location>
        <position position="532"/>
    </location>
</feature>
<feature type="sequence conflict" description="In Ref. 1; AAG33252." evidence="18" ref="1">
    <original>ER</original>
    <variation>DG</variation>
    <location>
        <begin position="30"/>
        <end position="31"/>
    </location>
</feature>
<feature type="sequence conflict" description="In Ref. 1; AAG33252." evidence="18" ref="1">
    <original>A</original>
    <variation>T</variation>
    <location>
        <position position="60"/>
    </location>
</feature>
<feature type="sequence conflict" description="In Ref. 1; AAG33252." evidence="18" ref="1">
    <original>V</original>
    <variation>A</variation>
    <location>
        <position position="65"/>
    </location>
</feature>
<feature type="sequence conflict" description="In Ref. 1; AAG33252." evidence="18" ref="1">
    <original>PS</original>
    <variation>AL</variation>
    <location>
        <begin position="113"/>
        <end position="114"/>
    </location>
</feature>
<feature type="sequence conflict" description="In Ref. 1; AAG33252." evidence="18" ref="1">
    <original>T</original>
    <variation>S</variation>
    <location>
        <position position="117"/>
    </location>
</feature>
<feature type="sequence conflict" description="In Ref. 1; AAG33252." evidence="18" ref="1">
    <original>R</original>
    <variation>Q</variation>
    <location>
        <position position="134"/>
    </location>
</feature>
<feature type="sequence conflict" description="In Ref. 5; AAH48306." evidence="18" ref="5">
    <original>L</original>
    <variation>S</variation>
    <location>
        <position position="161"/>
    </location>
</feature>
<accession>Q9H4L4</accession>
<accession>Q66K15</accession>
<accession>Q86VS7</accession>
<accession>Q96PS4</accession>
<accession>Q9Y3W9</accession>
<sequence>MKETIQGTGSWGPEPPGPGIPPAYSSPRRERLRWPPPPKPRLKSGGGFGPDPGSGTTVPARRLPVPRPSFDASASEEEEEEEEEEDEDEEEEVAAWRLPPRWSQLGTSQRPRPSRPTHRKTCSQRRRRAMRAFRMLLYSKSTSLTFHWKLWGRHRGRRRGLAHPKNHLSPQQGGATPQVPSPCCRFDSPRGPPPPRLGLLGALMAEDGVRGSPPVPSGPPMEEDGLRWTPKSPLDPDSGLLSCTLPNGFGGQSGPEGERSLAPPDASILISNVCSIGDHVAQELFQGSDLGMAEEAERPGEKAGQHSPLREEHVTCVQSILDEFLQTYGSLIPLSTDEVVEKLEDIFQQEFSTPSRKGLVLQLIQSYQRMPGNAMVRGFRVAYKRHVLTMDDLGTLYGQNWLNDQVMNMYGDLVMDTVPEKVHFFNSFFYDKLRTKGYDGVKRWTKNVDIFNKELLLIPIHLEVHWSLISVDVRRRTITYFDSQRTLNRRCPKHIAKYLQAEAVKKDRLDFHQGWKGYFKMNVARQNNDSDCGAFVLQYCKHLALSQPFSFTQQDMPKLRRQIYKELCHCKLTV</sequence>
<keyword id="KW-0963">Cytoplasm</keyword>
<keyword id="KW-0378">Hydrolase</keyword>
<keyword id="KW-0539">Nucleus</keyword>
<keyword id="KW-0597">Phosphoprotein</keyword>
<keyword id="KW-0645">Protease</keyword>
<keyword id="KW-1267">Proteomics identification</keyword>
<keyword id="KW-1185">Reference proteome</keyword>
<keyword id="KW-0788">Thiol protease</keyword>
<keyword id="KW-0833">Ubl conjugation pathway</keyword>
<protein>
    <recommendedName>
        <fullName>Sentrin-specific protease 3</fullName>
        <ecNumber evidence="15">3.4.22.-</ecNumber>
    </recommendedName>
    <alternativeName>
        <fullName>SUMO-1-specific protease 3</fullName>
    </alternativeName>
    <alternativeName>
        <fullName>Sentrin/SUMO-specific protease SENP3</fullName>
    </alternativeName>
</protein>